<feature type="signal peptide" description="Tat-type signal" evidence="1">
    <location>
        <begin position="1"/>
        <end position="30"/>
    </location>
</feature>
<feature type="chain" id="PRO_0000398168" description="Rubber oxygenase">
    <location>
        <begin position="31"/>
        <end position="407"/>
    </location>
</feature>
<feature type="binding site" description="axial binding residue" evidence="13">
    <location>
        <position position="198"/>
    </location>
    <ligand>
        <name>heme</name>
        <dbReference type="ChEBI" id="CHEBI:30413"/>
    </ligand>
    <ligandPart>
        <name>Fe</name>
        <dbReference type="ChEBI" id="CHEBI:18248"/>
    </ligandPart>
</feature>
<feature type="mutagenesis site" description="Impairs clear zone and aldehyde formation." evidence="3">
    <original>M</original>
    <variation>A</variation>
    <location>
        <position position="1"/>
    </location>
</feature>
<feature type="mutagenesis site" description="Impairs clear zone and aldehyde formation." evidence="3">
    <original>R</original>
    <variation>A</variation>
    <location>
        <position position="6"/>
    </location>
</feature>
<feature type="mutagenesis site" description="Does not impair clear zone and aldehyde formation." evidence="3">
    <original>R</original>
    <variation>A</variation>
    <location>
        <position position="7"/>
    </location>
</feature>
<feature type="mutagenesis site" description="Does not impair clear zone formation." evidence="3">
    <original>M</original>
    <variation>A</variation>
    <location>
        <position position="11"/>
    </location>
</feature>
<feature type="mutagenesis site" description="Loss of catalytic activity. Still contains a heme group." evidence="7">
    <original>R</original>
    <variation>A</variation>
    <location>
        <position position="164"/>
    </location>
</feature>
<feature type="mutagenesis site" description="2% of wild-type catalytic activity. Still contains a heme group." evidence="7">
    <original>T</original>
    <variation>A</variation>
    <location>
        <position position="168"/>
    </location>
</feature>
<feature type="mutagenesis site" description="Unstable." evidence="7">
    <original>R</original>
    <variation>A</variation>
    <location>
        <position position="195"/>
    </location>
</feature>
<feature type="mutagenesis site" description="Loss of catalytic activity. Loss of heme binding." evidence="7">
    <original>H</original>
    <variation>A</variation>
    <location>
        <position position="198"/>
    </location>
</feature>
<feature type="mutagenesis site" description="Unstable." evidence="7">
    <original>R</original>
    <variation>A</variation>
    <location>
        <position position="202"/>
    </location>
</feature>
<feature type="mutagenesis site" description="No effect on catalytic activity and on heme binding." evidence="7">
    <original>H</original>
    <variation>A</variation>
    <location>
        <position position="203"/>
    </location>
</feature>
<feature type="mutagenesis site" description="No effect on catalytic activity and on heme binding." evidence="7">
    <original>H</original>
    <variation>A</variation>
    <location>
        <position position="232"/>
    </location>
</feature>
<feature type="mutagenesis site" description="No effect on catalytic activity and on heme binding." evidence="7">
    <original>H</original>
    <variation>A</variation>
    <location>
        <position position="259"/>
    </location>
</feature>
<feature type="mutagenesis site" description="No effect on catalytic activity and on heme binding." evidence="7">
    <original>H</original>
    <variation>A</variation>
    <location>
        <position position="266"/>
    </location>
</feature>
<feature type="mutagenesis site" description="No effect on catalytic activity and on heme binding." evidence="7">
    <original>R</original>
    <variation>A</variation>
    <location>
        <position position="328"/>
    </location>
</feature>
<feature type="helix" evidence="14">
    <location>
        <begin position="38"/>
        <end position="40"/>
    </location>
</feature>
<feature type="strand" evidence="14">
    <location>
        <begin position="41"/>
        <end position="43"/>
    </location>
</feature>
<feature type="helix" evidence="14">
    <location>
        <begin position="51"/>
        <end position="53"/>
    </location>
</feature>
<feature type="helix" evidence="14">
    <location>
        <begin position="59"/>
        <end position="68"/>
    </location>
</feature>
<feature type="helix" evidence="14">
    <location>
        <begin position="72"/>
        <end position="79"/>
    </location>
</feature>
<feature type="helix" evidence="14">
    <location>
        <begin position="95"/>
        <end position="104"/>
    </location>
</feature>
<feature type="helix" evidence="14">
    <location>
        <begin position="113"/>
        <end position="125"/>
    </location>
</feature>
<feature type="helix" evidence="14">
    <location>
        <begin position="127"/>
        <end position="135"/>
    </location>
</feature>
<feature type="helix" evidence="14">
    <location>
        <begin position="137"/>
        <end position="142"/>
    </location>
</feature>
<feature type="helix" evidence="14">
    <location>
        <begin position="146"/>
        <end position="154"/>
    </location>
</feature>
<feature type="strand" evidence="14">
    <location>
        <begin position="157"/>
        <end position="159"/>
    </location>
</feature>
<feature type="helix" evidence="14">
    <location>
        <begin position="161"/>
        <end position="169"/>
    </location>
</feature>
<feature type="turn" evidence="14">
    <location>
        <begin position="170"/>
        <end position="176"/>
    </location>
</feature>
<feature type="turn" evidence="14">
    <location>
        <begin position="178"/>
        <end position="181"/>
    </location>
</feature>
<feature type="helix" evidence="14">
    <location>
        <begin position="187"/>
        <end position="204"/>
    </location>
</feature>
<feature type="helix" evidence="14">
    <location>
        <begin position="205"/>
        <end position="207"/>
    </location>
</feature>
<feature type="helix" evidence="14">
    <location>
        <begin position="209"/>
        <end position="214"/>
    </location>
</feature>
<feature type="strand" evidence="14">
    <location>
        <begin position="219"/>
        <end position="222"/>
    </location>
</feature>
<feature type="helix" evidence="14">
    <location>
        <begin position="224"/>
        <end position="244"/>
    </location>
</feature>
<feature type="helix" evidence="14">
    <location>
        <begin position="251"/>
        <end position="267"/>
    </location>
</feature>
<feature type="strand" evidence="14">
    <location>
        <begin position="274"/>
        <end position="278"/>
    </location>
</feature>
<feature type="helix" evidence="14">
    <location>
        <begin position="279"/>
        <end position="289"/>
    </location>
</feature>
<feature type="helix" evidence="14">
    <location>
        <begin position="291"/>
        <end position="293"/>
    </location>
</feature>
<feature type="helix" evidence="14">
    <location>
        <begin position="298"/>
        <end position="313"/>
    </location>
</feature>
<feature type="helix" evidence="14">
    <location>
        <begin position="320"/>
        <end position="331"/>
    </location>
</feature>
<feature type="helix" evidence="14">
    <location>
        <begin position="333"/>
        <end position="339"/>
    </location>
</feature>
<feature type="helix" evidence="14">
    <location>
        <begin position="345"/>
        <end position="362"/>
    </location>
</feature>
<feature type="strand" evidence="15">
    <location>
        <begin position="365"/>
        <end position="367"/>
    </location>
</feature>
<feature type="helix" evidence="14">
    <location>
        <begin position="373"/>
        <end position="393"/>
    </location>
</feature>
<comment type="function">
    <text evidence="2 3 4 5 6">Involved in the initial step of rubber degradation (PubMed:15638519, PubMed:18606806, PubMed:22950008). Catalyzes the oxidative C-C cleavage of poly(cis-1,4-isoprene) in synthetic as well as in natural rubber by the addition of oxygen (O2) to the double bonds, leading to a mixture of oligonucleotide-isoprenoids with terminal keto and aldehyde groups (endo-type cleavage) (PubMed:24907333, PubMed:25819959). The cleavage products are of different lengths, ranging from C20 (four isoprene units) to higher oligo-isoprenoids (PubMed:24907333). Is not able to cleave low-molecular-weight substrate analogs with isoprenoid structure such as squalene (1,4-trans-isoprenoid), carotenoids, or alpha-tocopherol (PubMed:24907333).</text>
</comment>
<comment type="cofactor">
    <cofactor evidence="6">
        <name>heme b</name>
        <dbReference type="ChEBI" id="CHEBI:60344"/>
    </cofactor>
    <text evidence="6">Binds 1 b-type heme group non-covalently per subunit.</text>
</comment>
<comment type="biophysicochemical properties">
    <phDependence>
        <text evidence="5">Optimum pH is 6-8.</text>
    </phDependence>
    <temperatureDependence>
        <text evidence="6">Shows a 3-fold higher specific activity at 37 degrees Celsius than at 25 degrees Celsius. Has a melting temperature of 61.5 degrees Celsius.</text>
    </temperatureDependence>
</comment>
<comment type="pathway">
    <text evidence="2 4">Biopolymer metabolism.</text>
</comment>
<comment type="subcellular location">
    <subcellularLocation>
        <location evidence="3">Secreted</location>
    </subcellularLocation>
</comment>
<comment type="induction">
    <text evidence="3">Weakly transcribed during growth on glucose. Strongly induced by poly(cis-1,4-isoprene).</text>
</comment>
<comment type="PTM">
    <text evidence="3">Exported by the Tat system. The position of the signal peptide cleavage has not been experimentally proven.</text>
</comment>
<comment type="disruption phenotype">
    <text evidence="4">Cells lacking this gene exhibit reduced growth in medium containing poly(cis-1,4-isoprene) as the sole carbon and energy source. Additionally, they show no detectable Lcp activity on latex overlay agar plates, being unable to form a clear zone and to produce aldehydes. Complementation with the wild-type lcp gene restores the wild-type phenotype.</text>
</comment>
<comment type="similarity">
    <text evidence="12">Belongs to the rubber oxygenase Lcp family.</text>
</comment>
<reference key="1">
    <citation type="journal article" date="2008" name="Appl. Environ. Microbiol.">
        <title>Secretion and transcriptional regulation of the latex-clearing protein, Lcp, by the rubber-degrading bacterium Streptomyces sp. strain K30.</title>
        <authorList>
            <person name="Yikmis M."/>
            <person name="Arenskotter M."/>
            <person name="Rose K."/>
            <person name="Lange N."/>
            <person name="Wernsmann H."/>
            <person name="Wiefel L."/>
            <person name="Steinbuchel A."/>
        </authorList>
    </citation>
    <scope>NUCLEOTIDE SEQUENCE [GENOMIC DNA] OF 1-50</scope>
    <scope>IDENTIFICATION OF START SITE</scope>
    <scope>FUNCTION</scope>
    <scope>SUBCELLULAR LOCATION</scope>
    <scope>EXPORT VIA THE TAT-SYSTEM</scope>
    <scope>INDUCTION</scope>
    <scope>MUTAGENESIS OF MET-1; ARG-6; ARG-7 AND MET-11</scope>
    <source>
        <strain>K30</strain>
    </source>
</reference>
<reference key="2">
    <citation type="journal article" date="2005" name="Biomacromolecules">
        <title>Identification and characterization of genes from Streptomyces sp. strain K30 responsible for clear zone formation on natural rubber latex and poly(cis-1,4-isoprene) rubber degradation.</title>
        <authorList>
            <person name="Rose K."/>
            <person name="Tenberge K.B."/>
            <person name="Steinbuchel A."/>
        </authorList>
    </citation>
    <scope>NUCLEOTIDE SEQUENCE [GENOMIC DNA] OF 11-407</scope>
    <scope>FUNCTION</scope>
    <scope>PATHWAY</scope>
    <source>
        <strain>K30</strain>
    </source>
</reference>
<reference key="3">
    <citation type="journal article" date="2012" name="MicrobiologyOpen">
        <title>Importance of the latex-clearing protein (Lcp) for poly(cis-1,4-isoprene) rubber cleavage in Streptomyces sp. K30.</title>
        <authorList>
            <person name="Yikmis M."/>
            <person name="Steinbuechel A."/>
        </authorList>
    </citation>
    <scope>DISRUPTION PHENOTYPE</scope>
    <scope>FUNCTION</scope>
    <scope>PATHWAY</scope>
    <source>
        <strain>K30</strain>
    </source>
</reference>
<reference key="4">
    <citation type="journal article" date="2014" name="Appl. Environ. Microbiol.">
        <title>Rubber oxygenase and latex clearing protein cleave rubber to different products and use different cleavage mechanisms.</title>
        <authorList>
            <person name="Birke J."/>
            <person name="Jendrossek D."/>
        </authorList>
    </citation>
    <scope>FUNCTION</scope>
    <scope>CATALYTIC ACTIVITY</scope>
    <scope>SUBSTRATE SPECIFICITY</scope>
    <scope>BIOPHYSICOCHEMICAL PROPERTIES</scope>
    <source>
        <strain>K30</strain>
    </source>
</reference>
<reference key="5">
    <citation type="journal article" date="2015" name="Appl. Environ. Microbiol.">
        <title>Latex clearing protein (Lcp) of Streptomyces sp. strain K30 is a b-type cytochrome and differs from rubber oxygenase A (RoxA) in its biophysical properties.</title>
        <authorList>
            <person name="Birke J."/>
            <person name="Roether W."/>
            <person name="Jendrossek D."/>
        </authorList>
    </citation>
    <scope>FUNCTION</scope>
    <scope>CATALYTIC ACTIVITY</scope>
    <scope>COFACTOR</scope>
    <scope>BIOPHYSICOCHEMICAL PROPERTIES</scope>
    <source>
        <strain>K30</strain>
    </source>
</reference>
<reference key="6">
    <citation type="journal article" date="2016" name="Appl. Environ. Microbiol.">
        <title>Cleavage of rubber by the latex clearing protein (Lcp) of Streptomyces sp. strain K30: molecular insights.</title>
        <authorList>
            <person name="Roether W."/>
            <person name="Austen S."/>
            <person name="Birke J."/>
            <person name="Jendrossek D."/>
        </authorList>
    </citation>
    <scope>MUTAGENESIS OF ARG-164; THR-168; ARG-195; HIS-198; ARG-202; HIS-203; HIS-232; HIS-259; HIS-266 AND ARG-328</scope>
    <source>
        <strain>K30</strain>
    </source>
</reference>
<protein>
    <recommendedName>
        <fullName evidence="9 11">Rubber oxygenase</fullName>
        <ecNumber evidence="5 6">1.13.-.-</ecNumber>
    </recommendedName>
    <alternativeName>
        <fullName evidence="8 10 11">Latex clearing protein</fullName>
    </alternativeName>
    <alternativeName>
        <fullName evidence="10">b-type cytochrome Lcp</fullName>
    </alternativeName>
</protein>
<dbReference type="EC" id="1.13.-.-" evidence="5 6"/>
<dbReference type="EMBL" id="AY387589">
    <property type="protein sequence ID" value="AAR25849.1"/>
    <property type="molecule type" value="Genomic_DNA"/>
</dbReference>
<dbReference type="PDB" id="5O1L">
    <property type="method" value="X-ray"/>
    <property type="resolution" value="1.48 A"/>
    <property type="chains" value="A/B=1-407"/>
</dbReference>
<dbReference type="PDB" id="5O1M">
    <property type="method" value="X-ray"/>
    <property type="resolution" value="2.20 A"/>
    <property type="chains" value="A/B=32-402"/>
</dbReference>
<dbReference type="PDBsum" id="5O1L"/>
<dbReference type="PDBsum" id="5O1M"/>
<dbReference type="SMR" id="Q3L8N0"/>
<dbReference type="KEGG" id="ag:AAR25849"/>
<dbReference type="BioCyc" id="MetaCyc:MONOMER-20301"/>
<dbReference type="BRENDA" id="1.13.11.85">
    <property type="organism ID" value="15404"/>
</dbReference>
<dbReference type="BRENDA" id="1.13.11.87">
    <property type="organism ID" value="15404"/>
</dbReference>
<dbReference type="BRENDA" id="1.13.99.B1">
    <property type="organism ID" value="15404"/>
</dbReference>
<dbReference type="GO" id="GO:0005576">
    <property type="term" value="C:extracellular region"/>
    <property type="evidence" value="ECO:0007669"/>
    <property type="project" value="UniProtKB-SubCell"/>
</dbReference>
<dbReference type="GO" id="GO:0020037">
    <property type="term" value="F:heme binding"/>
    <property type="evidence" value="ECO:0000314"/>
    <property type="project" value="UniProtKB"/>
</dbReference>
<dbReference type="GO" id="GO:0046872">
    <property type="term" value="F:metal ion binding"/>
    <property type="evidence" value="ECO:0007669"/>
    <property type="project" value="UniProtKB-KW"/>
</dbReference>
<dbReference type="GO" id="GO:0016701">
    <property type="term" value="F:oxidoreductase activity, acting on single donors with incorporation of molecular oxygen"/>
    <property type="evidence" value="ECO:0000314"/>
    <property type="project" value="UniProtKB"/>
</dbReference>
<dbReference type="GO" id="GO:0008300">
    <property type="term" value="P:isoprenoid catabolic process"/>
    <property type="evidence" value="ECO:0000314"/>
    <property type="project" value="UniProtKB"/>
</dbReference>
<dbReference type="InterPro" id="IPR037473">
    <property type="entry name" value="Lcp-like"/>
</dbReference>
<dbReference type="InterPro" id="IPR018713">
    <property type="entry name" value="MPAB/Lcp_cat_dom"/>
</dbReference>
<dbReference type="InterPro" id="IPR006311">
    <property type="entry name" value="TAT_signal"/>
</dbReference>
<dbReference type="PANTHER" id="PTHR37539:SF1">
    <property type="entry name" value="ER-BOUND OXYGENASE MPAB_MPAB'_RUBBER OXYGENASE CATALYTIC DOMAIN-CONTAINING PROTEIN"/>
    <property type="match status" value="1"/>
</dbReference>
<dbReference type="PANTHER" id="PTHR37539">
    <property type="entry name" value="SECRETED PROTEIN-RELATED"/>
    <property type="match status" value="1"/>
</dbReference>
<dbReference type="Pfam" id="PF09995">
    <property type="entry name" value="MPAB_Lcp_cat"/>
    <property type="match status" value="1"/>
</dbReference>
<dbReference type="PROSITE" id="PS51318">
    <property type="entry name" value="TAT"/>
    <property type="match status" value="1"/>
</dbReference>
<name>LCP_STRK3</name>
<proteinExistence type="evidence at protein level"/>
<evidence type="ECO:0000255" key="1">
    <source>
        <dbReference type="PROSITE-ProRule" id="PRU00648"/>
    </source>
</evidence>
<evidence type="ECO:0000269" key="2">
    <source>
    </source>
</evidence>
<evidence type="ECO:0000269" key="3">
    <source>
    </source>
</evidence>
<evidence type="ECO:0000269" key="4">
    <source>
    </source>
</evidence>
<evidence type="ECO:0000269" key="5">
    <source>
    </source>
</evidence>
<evidence type="ECO:0000269" key="6">
    <source>
    </source>
</evidence>
<evidence type="ECO:0000269" key="7">
    <source>
    </source>
</evidence>
<evidence type="ECO:0000303" key="8">
    <source>
    </source>
</evidence>
<evidence type="ECO:0000303" key="9">
    <source>
    </source>
</evidence>
<evidence type="ECO:0000303" key="10">
    <source>
    </source>
</evidence>
<evidence type="ECO:0000303" key="11">
    <source>
    </source>
</evidence>
<evidence type="ECO:0000305" key="12"/>
<evidence type="ECO:0000305" key="13">
    <source>
    </source>
</evidence>
<evidence type="ECO:0007829" key="14">
    <source>
        <dbReference type="PDB" id="5O1L"/>
    </source>
</evidence>
<evidence type="ECO:0007829" key="15">
    <source>
        <dbReference type="PDB" id="5O1M"/>
    </source>
</evidence>
<sequence length="407" mass="44006">MDGFSRRRMLMTGGALGAVGALGAATRALARPLWTWSPSASVAGTGVGVDPEYVWDEEADPVLAAVIDRGEVPAVNALLKQWTRNDQALPGGLPGDLREFMEHARRMPSWADKAALDRGAQFSKTKGIYVGALYGLGSGLMSTAIPRESRAVYYSKGGADMKDRIAKTARLGYDIGDLDAYLPHGSMIVTAVKTRMVHAAVRHLLPQSPAWSQTSGGQKIPISQADIMVTWHSLATFVMRKMKQWGVRVNTADAEAYLHVWQVSAHMLGVSDEYIPATWDAANAQSKQVLDPILAHTPEGEALTEVLLGIVAELDAGLTRPLIGAFSRYTLGGEVGDMIGLAKQPVLERLIATAWPLLVAFREGLIPLPAVPAVLWTLEEALRKFVLLFLSEGRRIAIDIPDVNRPS</sequence>
<keyword id="KW-0002">3D-structure</keyword>
<keyword id="KW-0349">Heme</keyword>
<keyword id="KW-0408">Iron</keyword>
<keyword id="KW-0479">Metal-binding</keyword>
<keyword id="KW-0560">Oxidoreductase</keyword>
<keyword id="KW-0964">Secreted</keyword>
<keyword id="KW-0732">Signal</keyword>
<organism>
    <name type="scientific">Streptomyces sp. (strain K30)</name>
    <dbReference type="NCBI Taxonomy" id="256642"/>
    <lineage>
        <taxon>Bacteria</taxon>
        <taxon>Bacillati</taxon>
        <taxon>Actinomycetota</taxon>
        <taxon>Actinomycetes</taxon>
        <taxon>Kitasatosporales</taxon>
        <taxon>Streptomycetaceae</taxon>
        <taxon>Streptomyces</taxon>
    </lineage>
</organism>
<accession>Q3L8N0</accession>
<gene>
    <name evidence="8" type="primary">lcp</name>
</gene>